<proteinExistence type="inferred from homology"/>
<comment type="catalytic activity">
    <reaction evidence="1">
        <text>tRNA(Cys) + L-cysteine + ATP = L-cysteinyl-tRNA(Cys) + AMP + diphosphate</text>
        <dbReference type="Rhea" id="RHEA:17773"/>
        <dbReference type="Rhea" id="RHEA-COMP:9661"/>
        <dbReference type="Rhea" id="RHEA-COMP:9679"/>
        <dbReference type="ChEBI" id="CHEBI:30616"/>
        <dbReference type="ChEBI" id="CHEBI:33019"/>
        <dbReference type="ChEBI" id="CHEBI:35235"/>
        <dbReference type="ChEBI" id="CHEBI:78442"/>
        <dbReference type="ChEBI" id="CHEBI:78517"/>
        <dbReference type="ChEBI" id="CHEBI:456215"/>
        <dbReference type="EC" id="6.1.1.16"/>
    </reaction>
</comment>
<comment type="cofactor">
    <cofactor evidence="1">
        <name>Zn(2+)</name>
        <dbReference type="ChEBI" id="CHEBI:29105"/>
    </cofactor>
    <text evidence="1">Binds 1 zinc ion per subunit.</text>
</comment>
<comment type="subunit">
    <text evidence="1">Monomer.</text>
</comment>
<comment type="subcellular location">
    <subcellularLocation>
        <location evidence="1">Cytoplasm</location>
    </subcellularLocation>
</comment>
<comment type="similarity">
    <text evidence="1">Belongs to the class-I aminoacyl-tRNA synthetase family.</text>
</comment>
<dbReference type="EC" id="6.1.1.16" evidence="1"/>
<dbReference type="EMBL" id="CP000359">
    <property type="protein sequence ID" value="ABF46009.1"/>
    <property type="molecule type" value="Genomic_DNA"/>
</dbReference>
<dbReference type="RefSeq" id="WP_011530840.1">
    <property type="nucleotide sequence ID" value="NC_008025.1"/>
</dbReference>
<dbReference type="SMR" id="Q1IXM5"/>
<dbReference type="STRING" id="319795.Dgeo_1714"/>
<dbReference type="KEGG" id="dge:Dgeo_1714"/>
<dbReference type="eggNOG" id="COG0215">
    <property type="taxonomic scope" value="Bacteria"/>
</dbReference>
<dbReference type="HOGENOM" id="CLU_013528_0_1_0"/>
<dbReference type="Proteomes" id="UP000002431">
    <property type="component" value="Chromosome"/>
</dbReference>
<dbReference type="GO" id="GO:0005829">
    <property type="term" value="C:cytosol"/>
    <property type="evidence" value="ECO:0007669"/>
    <property type="project" value="TreeGrafter"/>
</dbReference>
<dbReference type="GO" id="GO:0005524">
    <property type="term" value="F:ATP binding"/>
    <property type="evidence" value="ECO:0007669"/>
    <property type="project" value="UniProtKB-UniRule"/>
</dbReference>
<dbReference type="GO" id="GO:0004817">
    <property type="term" value="F:cysteine-tRNA ligase activity"/>
    <property type="evidence" value="ECO:0007669"/>
    <property type="project" value="UniProtKB-UniRule"/>
</dbReference>
<dbReference type="GO" id="GO:0008270">
    <property type="term" value="F:zinc ion binding"/>
    <property type="evidence" value="ECO:0007669"/>
    <property type="project" value="UniProtKB-UniRule"/>
</dbReference>
<dbReference type="GO" id="GO:0006423">
    <property type="term" value="P:cysteinyl-tRNA aminoacylation"/>
    <property type="evidence" value="ECO:0007669"/>
    <property type="project" value="UniProtKB-UniRule"/>
</dbReference>
<dbReference type="CDD" id="cd00672">
    <property type="entry name" value="CysRS_core"/>
    <property type="match status" value="1"/>
</dbReference>
<dbReference type="Gene3D" id="1.20.120.1910">
    <property type="entry name" value="Cysteine-tRNA ligase, C-terminal anti-codon recognition domain"/>
    <property type="match status" value="1"/>
</dbReference>
<dbReference type="Gene3D" id="3.40.50.620">
    <property type="entry name" value="HUPs"/>
    <property type="match status" value="1"/>
</dbReference>
<dbReference type="HAMAP" id="MF_00041">
    <property type="entry name" value="Cys_tRNA_synth"/>
    <property type="match status" value="1"/>
</dbReference>
<dbReference type="InterPro" id="IPR015803">
    <property type="entry name" value="Cys-tRNA-ligase"/>
</dbReference>
<dbReference type="InterPro" id="IPR015273">
    <property type="entry name" value="Cys-tRNA-synt_Ia_DALR"/>
</dbReference>
<dbReference type="InterPro" id="IPR024909">
    <property type="entry name" value="Cys-tRNA/MSH_ligase"/>
</dbReference>
<dbReference type="InterPro" id="IPR056411">
    <property type="entry name" value="CysS_C"/>
</dbReference>
<dbReference type="InterPro" id="IPR014729">
    <property type="entry name" value="Rossmann-like_a/b/a_fold"/>
</dbReference>
<dbReference type="InterPro" id="IPR032678">
    <property type="entry name" value="tRNA-synt_1_cat_dom"/>
</dbReference>
<dbReference type="InterPro" id="IPR009080">
    <property type="entry name" value="tRNAsynth_Ia_anticodon-bd"/>
</dbReference>
<dbReference type="NCBIfam" id="TIGR00435">
    <property type="entry name" value="cysS"/>
    <property type="match status" value="1"/>
</dbReference>
<dbReference type="PANTHER" id="PTHR10890:SF3">
    <property type="entry name" value="CYSTEINE--TRNA LIGASE, CYTOPLASMIC"/>
    <property type="match status" value="1"/>
</dbReference>
<dbReference type="PANTHER" id="PTHR10890">
    <property type="entry name" value="CYSTEINYL-TRNA SYNTHETASE"/>
    <property type="match status" value="1"/>
</dbReference>
<dbReference type="Pfam" id="PF23493">
    <property type="entry name" value="CysS_C"/>
    <property type="match status" value="1"/>
</dbReference>
<dbReference type="Pfam" id="PF09190">
    <property type="entry name" value="DALR_2"/>
    <property type="match status" value="1"/>
</dbReference>
<dbReference type="Pfam" id="PF01406">
    <property type="entry name" value="tRNA-synt_1e"/>
    <property type="match status" value="1"/>
</dbReference>
<dbReference type="PRINTS" id="PR00983">
    <property type="entry name" value="TRNASYNTHCYS"/>
</dbReference>
<dbReference type="SMART" id="SM00840">
    <property type="entry name" value="DALR_2"/>
    <property type="match status" value="1"/>
</dbReference>
<dbReference type="SUPFAM" id="SSF47323">
    <property type="entry name" value="Anticodon-binding domain of a subclass of class I aminoacyl-tRNA synthetases"/>
    <property type="match status" value="1"/>
</dbReference>
<dbReference type="SUPFAM" id="SSF52374">
    <property type="entry name" value="Nucleotidylyl transferase"/>
    <property type="match status" value="1"/>
</dbReference>
<feature type="chain" id="PRO_0000332814" description="Cysteine--tRNA ligase">
    <location>
        <begin position="1"/>
        <end position="497"/>
    </location>
</feature>
<feature type="short sequence motif" description="'HIGH' region">
    <location>
        <begin position="48"/>
        <end position="58"/>
    </location>
</feature>
<feature type="short sequence motif" description="'KMSKS' region">
    <location>
        <begin position="293"/>
        <end position="297"/>
    </location>
</feature>
<feature type="binding site" evidence="1">
    <location>
        <position position="46"/>
    </location>
    <ligand>
        <name>Zn(2+)</name>
        <dbReference type="ChEBI" id="CHEBI:29105"/>
    </ligand>
</feature>
<feature type="binding site" evidence="1">
    <location>
        <position position="237"/>
    </location>
    <ligand>
        <name>Zn(2+)</name>
        <dbReference type="ChEBI" id="CHEBI:29105"/>
    </ligand>
</feature>
<feature type="binding site" evidence="1">
    <location>
        <position position="262"/>
    </location>
    <ligand>
        <name>Zn(2+)</name>
        <dbReference type="ChEBI" id="CHEBI:29105"/>
    </ligand>
</feature>
<feature type="binding site" evidence="1">
    <location>
        <position position="266"/>
    </location>
    <ligand>
        <name>Zn(2+)</name>
        <dbReference type="ChEBI" id="CHEBI:29105"/>
    </ligand>
</feature>
<feature type="binding site" evidence="1">
    <location>
        <position position="296"/>
    </location>
    <ligand>
        <name>ATP</name>
        <dbReference type="ChEBI" id="CHEBI:30616"/>
    </ligand>
</feature>
<sequence>MTQASSTSPEPSRRQPDSGIVLYDTMQRQKVPFVPSVPGRVGMYLCGPTVYSDAHLGHAKKEVAFDVIRRTLLHFGYQVRYVTNVTDVGHLQDDSDDGEDKIARRAALERLEPMEVADKYFWSFVEDMEALNVLKPSINPRATGHIPEQIALIEELIERGHAYVSDGSVYFDVRSWPEYGKLSGRRLDELEEGTREAVREEKRDPRDFALWKRAEPGHLMRWASPWGEGFPGWHIECSAMSLKYLGEGFDIHGGGLDLEFPHHEAEIAQAEAAGHPFARYWLHNNMVTVGGEKMSKSKGNFTTLKALFAQHDPMVIRFLLVSSHYRSITEFSDAAFESARSGYRRLTEALHEIERRLPAAPDQDDPALLEKIAGHIRTFEDAMRDDFNTPRAVAALFGLTTDVNAALNAGEVGRQALTAARDAYRTLGGGVLGLFAEGRTEREDDSQIVNALMELVLQARQHYRLQKQYAQADELRNTLAAVGVTVEDTREGPRWRR</sequence>
<reference key="1">
    <citation type="submission" date="2006-04" db="EMBL/GenBank/DDBJ databases">
        <title>Complete sequence of chromosome of Deinococcus geothermalis DSM 11300.</title>
        <authorList>
            <person name="Copeland A."/>
            <person name="Lucas S."/>
            <person name="Lapidus A."/>
            <person name="Barry K."/>
            <person name="Detter J.C."/>
            <person name="Glavina del Rio T."/>
            <person name="Hammon N."/>
            <person name="Israni S."/>
            <person name="Dalin E."/>
            <person name="Tice H."/>
            <person name="Pitluck S."/>
            <person name="Brettin T."/>
            <person name="Bruce D."/>
            <person name="Han C."/>
            <person name="Tapia R."/>
            <person name="Saunders E."/>
            <person name="Gilna P."/>
            <person name="Schmutz J."/>
            <person name="Larimer F."/>
            <person name="Land M."/>
            <person name="Hauser L."/>
            <person name="Kyrpides N."/>
            <person name="Kim E."/>
            <person name="Daly M.J."/>
            <person name="Fredrickson J.K."/>
            <person name="Makarova K.S."/>
            <person name="Gaidamakova E.K."/>
            <person name="Zhai M."/>
            <person name="Richardson P."/>
        </authorList>
    </citation>
    <scope>NUCLEOTIDE SEQUENCE [LARGE SCALE GENOMIC DNA]</scope>
    <source>
        <strain>DSM 11300 / CIP 105573 / AG-3a</strain>
    </source>
</reference>
<organism>
    <name type="scientific">Deinococcus geothermalis (strain DSM 11300 / CIP 105573 / AG-3a)</name>
    <dbReference type="NCBI Taxonomy" id="319795"/>
    <lineage>
        <taxon>Bacteria</taxon>
        <taxon>Thermotogati</taxon>
        <taxon>Deinococcota</taxon>
        <taxon>Deinococci</taxon>
        <taxon>Deinococcales</taxon>
        <taxon>Deinococcaceae</taxon>
        <taxon>Deinococcus</taxon>
    </lineage>
</organism>
<gene>
    <name evidence="1" type="primary">cysS</name>
    <name type="ordered locus">Dgeo_1714</name>
</gene>
<evidence type="ECO:0000255" key="1">
    <source>
        <dbReference type="HAMAP-Rule" id="MF_00041"/>
    </source>
</evidence>
<name>SYC_DEIGD</name>
<protein>
    <recommendedName>
        <fullName evidence="1">Cysteine--tRNA ligase</fullName>
        <ecNumber evidence="1">6.1.1.16</ecNumber>
    </recommendedName>
    <alternativeName>
        <fullName evidence="1">Cysteinyl-tRNA synthetase</fullName>
        <shortName evidence="1">CysRS</shortName>
    </alternativeName>
</protein>
<accession>Q1IXM5</accession>
<keyword id="KW-0030">Aminoacyl-tRNA synthetase</keyword>
<keyword id="KW-0067">ATP-binding</keyword>
<keyword id="KW-0963">Cytoplasm</keyword>
<keyword id="KW-0436">Ligase</keyword>
<keyword id="KW-0479">Metal-binding</keyword>
<keyword id="KW-0547">Nucleotide-binding</keyword>
<keyword id="KW-0648">Protein biosynthesis</keyword>
<keyword id="KW-0862">Zinc</keyword>